<organism>
    <name type="scientific">Polynucleobacter necessarius subsp. necessarius (strain STIR1)</name>
    <dbReference type="NCBI Taxonomy" id="452638"/>
    <lineage>
        <taxon>Bacteria</taxon>
        <taxon>Pseudomonadati</taxon>
        <taxon>Pseudomonadota</taxon>
        <taxon>Betaproteobacteria</taxon>
        <taxon>Burkholderiales</taxon>
        <taxon>Burkholderiaceae</taxon>
        <taxon>Polynucleobacter</taxon>
    </lineage>
</organism>
<dbReference type="EC" id="2.5.1.141" evidence="1"/>
<dbReference type="EMBL" id="CP001010">
    <property type="protein sequence ID" value="ACB44710.1"/>
    <property type="molecule type" value="Genomic_DNA"/>
</dbReference>
<dbReference type="SMR" id="B1XS75"/>
<dbReference type="STRING" id="452638.Pnec_1636"/>
<dbReference type="KEGG" id="pne:Pnec_1636"/>
<dbReference type="eggNOG" id="COG0109">
    <property type="taxonomic scope" value="Bacteria"/>
</dbReference>
<dbReference type="HOGENOM" id="CLU_029631_0_2_4"/>
<dbReference type="OrthoDB" id="9814417at2"/>
<dbReference type="UniPathway" id="UPA00834">
    <property type="reaction ID" value="UER00712"/>
</dbReference>
<dbReference type="GO" id="GO:0005886">
    <property type="term" value="C:plasma membrane"/>
    <property type="evidence" value="ECO:0007669"/>
    <property type="project" value="UniProtKB-SubCell"/>
</dbReference>
<dbReference type="GO" id="GO:0008495">
    <property type="term" value="F:protoheme IX farnesyltransferase activity"/>
    <property type="evidence" value="ECO:0007669"/>
    <property type="project" value="UniProtKB-UniRule"/>
</dbReference>
<dbReference type="GO" id="GO:0048034">
    <property type="term" value="P:heme O biosynthetic process"/>
    <property type="evidence" value="ECO:0007669"/>
    <property type="project" value="UniProtKB-UniRule"/>
</dbReference>
<dbReference type="CDD" id="cd13957">
    <property type="entry name" value="PT_UbiA_Cox10"/>
    <property type="match status" value="1"/>
</dbReference>
<dbReference type="Gene3D" id="1.10.357.140">
    <property type="entry name" value="UbiA prenyltransferase"/>
    <property type="match status" value="1"/>
</dbReference>
<dbReference type="HAMAP" id="MF_00154">
    <property type="entry name" value="CyoE_CtaB"/>
    <property type="match status" value="1"/>
</dbReference>
<dbReference type="InterPro" id="IPR006369">
    <property type="entry name" value="Protohaem_IX_farnesylTrfase"/>
</dbReference>
<dbReference type="InterPro" id="IPR000537">
    <property type="entry name" value="UbiA_prenyltransferase"/>
</dbReference>
<dbReference type="InterPro" id="IPR044878">
    <property type="entry name" value="UbiA_sf"/>
</dbReference>
<dbReference type="NCBIfam" id="TIGR01473">
    <property type="entry name" value="cyoE_ctaB"/>
    <property type="match status" value="1"/>
</dbReference>
<dbReference type="NCBIfam" id="NF003349">
    <property type="entry name" value="PRK04375.1-2"/>
    <property type="match status" value="1"/>
</dbReference>
<dbReference type="PANTHER" id="PTHR43448:SF7">
    <property type="entry name" value="4-HYDROXYBENZOATE SOLANESYLTRANSFERASE"/>
    <property type="match status" value="1"/>
</dbReference>
<dbReference type="PANTHER" id="PTHR43448">
    <property type="entry name" value="PROTOHEME IX FARNESYLTRANSFERASE, MITOCHONDRIAL"/>
    <property type="match status" value="1"/>
</dbReference>
<dbReference type="Pfam" id="PF01040">
    <property type="entry name" value="UbiA"/>
    <property type="match status" value="1"/>
</dbReference>
<protein>
    <recommendedName>
        <fullName evidence="1">Protoheme IX farnesyltransferase</fullName>
        <ecNumber evidence="1">2.5.1.141</ecNumber>
    </recommendedName>
    <alternativeName>
        <fullName evidence="1">Heme B farnesyltransferase</fullName>
    </alternativeName>
    <alternativeName>
        <fullName evidence="1">Heme O synthase</fullName>
    </alternativeName>
</protein>
<reference key="1">
    <citation type="journal article" date="2013" name="Proc. Natl. Acad. Sci. U.S.A.">
        <title>Polynucleobacter necessarius, a model for genome reduction in both free-living and symbiotic bacteria.</title>
        <authorList>
            <person name="Boscaro V."/>
            <person name="Felletti M."/>
            <person name="Vannini C."/>
            <person name="Ackerman M.S."/>
            <person name="Chain P.S."/>
            <person name="Malfatti S."/>
            <person name="Vergez L.M."/>
            <person name="Shin M."/>
            <person name="Doak T.G."/>
            <person name="Lynch M."/>
            <person name="Petroni G."/>
        </authorList>
    </citation>
    <scope>NUCLEOTIDE SEQUENCE [LARGE SCALE GENOMIC DNA]</scope>
    <source>
        <strain>STIR1</strain>
    </source>
</reference>
<name>COXX_POLNS</name>
<feature type="chain" id="PRO_1000199657" description="Protoheme IX farnesyltransferase">
    <location>
        <begin position="1"/>
        <end position="297"/>
    </location>
</feature>
<feature type="transmembrane region" description="Helical" evidence="1">
    <location>
        <begin position="26"/>
        <end position="46"/>
    </location>
</feature>
<feature type="transmembrane region" description="Helical" evidence="1">
    <location>
        <begin position="48"/>
        <end position="68"/>
    </location>
</feature>
<feature type="transmembrane region" description="Helical" evidence="1">
    <location>
        <begin position="96"/>
        <end position="116"/>
    </location>
</feature>
<feature type="transmembrane region" description="Helical" evidence="1">
    <location>
        <begin position="120"/>
        <end position="140"/>
    </location>
</feature>
<feature type="transmembrane region" description="Helical" evidence="1">
    <location>
        <begin position="147"/>
        <end position="167"/>
    </location>
</feature>
<feature type="transmembrane region" description="Helical" evidence="1">
    <location>
        <begin position="174"/>
        <end position="194"/>
    </location>
</feature>
<feature type="transmembrane region" description="Helical" evidence="1">
    <location>
        <begin position="218"/>
        <end position="238"/>
    </location>
</feature>
<feature type="transmembrane region" description="Helical" evidence="1">
    <location>
        <begin position="245"/>
        <end position="265"/>
    </location>
</feature>
<feature type="transmembrane region" description="Helical" evidence="1">
    <location>
        <begin position="276"/>
        <end position="296"/>
    </location>
</feature>
<sequence>MSDSKKSATVVMPRWRQYWVLTKPRVTQLAVFCAVIGMFLATPGMVPYPVLFGGIVGIWLLAGAAFAVNCLIEQAVDAKMKRTSWRPSATGEVTPLHIIIFSIILGSLGMIILWNFCNPLTMWLTLATFVGYAVIYTWLLKPATPQNIVIGGLSGAMPPALGWAAVTNTLSAEAWHLVLIIFVWTPPHFWALALYRRDDYVQSGLPMLPVTHGERFTLLNIVLYTLILIAATMLPYIYGMSGMVYLISAIILGLLFLAYVVALFISYSDALAKKTFRFSITYLSLLFAALLVDHYFL</sequence>
<evidence type="ECO:0000255" key="1">
    <source>
        <dbReference type="HAMAP-Rule" id="MF_00154"/>
    </source>
</evidence>
<comment type="function">
    <text evidence="1">Converts heme B (protoheme IX) to heme O by substitution of the vinyl group on carbon 2 of heme B porphyrin ring with a hydroxyethyl farnesyl side group.</text>
</comment>
<comment type="catalytic activity">
    <reaction evidence="1">
        <text>heme b + (2E,6E)-farnesyl diphosphate + H2O = Fe(II)-heme o + diphosphate</text>
        <dbReference type="Rhea" id="RHEA:28070"/>
        <dbReference type="ChEBI" id="CHEBI:15377"/>
        <dbReference type="ChEBI" id="CHEBI:33019"/>
        <dbReference type="ChEBI" id="CHEBI:60344"/>
        <dbReference type="ChEBI" id="CHEBI:60530"/>
        <dbReference type="ChEBI" id="CHEBI:175763"/>
        <dbReference type="EC" id="2.5.1.141"/>
    </reaction>
</comment>
<comment type="pathway">
    <text evidence="1">Porphyrin-containing compound metabolism; heme O biosynthesis; heme O from protoheme: step 1/1.</text>
</comment>
<comment type="subcellular location">
    <subcellularLocation>
        <location evidence="1">Cell inner membrane</location>
        <topology evidence="1">Multi-pass membrane protein</topology>
    </subcellularLocation>
</comment>
<comment type="miscellaneous">
    <text evidence="1">Carbon 2 of the heme B porphyrin ring is defined according to the Fischer nomenclature.</text>
</comment>
<comment type="similarity">
    <text evidence="1">Belongs to the UbiA prenyltransferase family. Protoheme IX farnesyltransferase subfamily.</text>
</comment>
<proteinExistence type="inferred from homology"/>
<gene>
    <name evidence="1" type="primary">ctaB</name>
    <name type="ordered locus">Pnec_1636</name>
</gene>
<accession>B1XS75</accession>
<keyword id="KW-0997">Cell inner membrane</keyword>
<keyword id="KW-1003">Cell membrane</keyword>
<keyword id="KW-0350">Heme biosynthesis</keyword>
<keyword id="KW-0472">Membrane</keyword>
<keyword id="KW-0808">Transferase</keyword>
<keyword id="KW-0812">Transmembrane</keyword>
<keyword id="KW-1133">Transmembrane helix</keyword>